<gene>
    <name type="primary">ACADS</name>
</gene>
<reference key="1">
    <citation type="submission" date="2005-08" db="EMBL/GenBank/DDBJ databases">
        <authorList>
            <consortium name="NIH - Mammalian Gene Collection (MGC) project"/>
        </authorList>
    </citation>
    <scope>NUCLEOTIDE SEQUENCE [LARGE SCALE MRNA]</scope>
    <source>
        <strain>Crossbred X Angus</strain>
        <tissue>Ileum</tissue>
    </source>
</reference>
<reference key="2">
    <citation type="journal article" date="1984" name="Biochem. J.">
        <title>The purification and properties of ox liver short-chain acyl-CoA dehydrogenase.</title>
        <authorList>
            <person name="Shaw L."/>
            <person name="Engel P.C."/>
        </authorList>
    </citation>
    <scope>FUNCTION</scope>
    <scope>CATALYTIC ACTIVITY</scope>
    <scope>SUBUNIT</scope>
    <scope>COFACTOR</scope>
    <scope>SUBCELLULAR LOCATION</scope>
    <scope>BIOPHYSICOCHEMICAL PROPERTIES</scope>
    <scope>SUBSTRATE SPECIFICITY</scope>
    <source>
        <tissue>Liver</tissue>
    </source>
</reference>
<name>ACADS_BOVIN</name>
<proteinExistence type="evidence at protein level"/>
<comment type="function">
    <text evidence="2 5">Short-chain specific acyl-CoA dehydrogenase is one of the acyl-CoA dehydrogenases that catalyze the first step of mitochondrial fatty acid beta-oxidation, an aerobic process breaking down fatty acids into acetyl-CoA and allowing the production of energy from fats. The first step of fatty acid beta-oxidation consists in the removal of one hydrogen from C-2 and C-3 of the straight-chain fatty acyl-CoA thioester, resulting in the formation of trans-2-enoyl-CoA (By similarity). Among the different mitochondrial acyl-CoA dehydrogenases, short-chain specific acyl-CoA dehydrogenase acts specifically on acyl-CoAs with saturated 4 to 6 carbons long primary chains (PubMed:6712627).</text>
</comment>
<comment type="catalytic activity">
    <reaction evidence="5">
        <text>a short-chain 2,3-saturated fatty acyl-CoA + oxidized [electron-transfer flavoprotein] + H(+) = a short-chain (2E)-enoyl-CoA + reduced [electron-transfer flavoprotein]</text>
        <dbReference type="Rhea" id="RHEA:47196"/>
        <dbReference type="Rhea" id="RHEA-COMP:10685"/>
        <dbReference type="Rhea" id="RHEA-COMP:10686"/>
        <dbReference type="ChEBI" id="CHEBI:15378"/>
        <dbReference type="ChEBI" id="CHEBI:57692"/>
        <dbReference type="ChEBI" id="CHEBI:58307"/>
        <dbReference type="ChEBI" id="CHEBI:87487"/>
        <dbReference type="ChEBI" id="CHEBI:87488"/>
        <dbReference type="EC" id="1.3.8.1"/>
    </reaction>
    <physiologicalReaction direction="left-to-right" evidence="7">
        <dbReference type="Rhea" id="RHEA:47197"/>
    </physiologicalReaction>
</comment>
<comment type="catalytic activity">
    <reaction evidence="5">
        <text>butanoyl-CoA + oxidized [electron-transfer flavoprotein] + H(+) = (2E)-butenoyl-CoA + reduced [electron-transfer flavoprotein]</text>
        <dbReference type="Rhea" id="RHEA:24004"/>
        <dbReference type="Rhea" id="RHEA-COMP:10685"/>
        <dbReference type="Rhea" id="RHEA-COMP:10686"/>
        <dbReference type="ChEBI" id="CHEBI:15378"/>
        <dbReference type="ChEBI" id="CHEBI:57332"/>
        <dbReference type="ChEBI" id="CHEBI:57371"/>
        <dbReference type="ChEBI" id="CHEBI:57692"/>
        <dbReference type="ChEBI" id="CHEBI:58307"/>
        <dbReference type="EC" id="1.3.8.1"/>
    </reaction>
    <physiologicalReaction direction="left-to-right" evidence="7">
        <dbReference type="Rhea" id="RHEA:24005"/>
    </physiologicalReaction>
</comment>
<comment type="catalytic activity">
    <reaction evidence="5">
        <text>pentanoyl-CoA + oxidized [electron-transfer flavoprotein] + H(+) = (2E)-pentenoyl-CoA + reduced [electron-transfer flavoprotein]</text>
        <dbReference type="Rhea" id="RHEA:43456"/>
        <dbReference type="Rhea" id="RHEA-COMP:10685"/>
        <dbReference type="Rhea" id="RHEA-COMP:10686"/>
        <dbReference type="ChEBI" id="CHEBI:15378"/>
        <dbReference type="ChEBI" id="CHEBI:57389"/>
        <dbReference type="ChEBI" id="CHEBI:57692"/>
        <dbReference type="ChEBI" id="CHEBI:58307"/>
        <dbReference type="ChEBI" id="CHEBI:86160"/>
    </reaction>
    <physiologicalReaction direction="left-to-right" evidence="7">
        <dbReference type="Rhea" id="RHEA:43457"/>
    </physiologicalReaction>
</comment>
<comment type="catalytic activity">
    <reaction evidence="5">
        <text>hexanoyl-CoA + oxidized [electron-transfer flavoprotein] + H(+) = (2E)-hexenoyl-CoA + reduced [electron-transfer flavoprotein]</text>
        <dbReference type="Rhea" id="RHEA:43464"/>
        <dbReference type="Rhea" id="RHEA-COMP:10685"/>
        <dbReference type="Rhea" id="RHEA-COMP:10686"/>
        <dbReference type="ChEBI" id="CHEBI:15378"/>
        <dbReference type="ChEBI" id="CHEBI:57692"/>
        <dbReference type="ChEBI" id="CHEBI:58307"/>
        <dbReference type="ChEBI" id="CHEBI:62077"/>
        <dbReference type="ChEBI" id="CHEBI:62620"/>
    </reaction>
    <physiologicalReaction direction="left-to-right" evidence="7">
        <dbReference type="Rhea" id="RHEA:43465"/>
    </physiologicalReaction>
</comment>
<comment type="cofactor">
    <cofactor evidence="5">
        <name>FAD</name>
        <dbReference type="ChEBI" id="CHEBI:57692"/>
    </cofactor>
    <text evidence="2">Binds 1 FAD per subunit.</text>
</comment>
<comment type="biophysicochemical properties">
    <kinetics>
        <KM evidence="5">90 uM for propanoyl-CoA</KM>
        <KM evidence="5">3 uM for butanoyl-CoA</KM>
        <KM evidence="5">10 uM for pentanoyl-CoA</KM>
        <KM evidence="5">22 uM for hexanoyl-CoA</KM>
        <KM evidence="5">31 uM for heptanoyl-CoA</KM>
        <KM evidence="5">29 uM for octanoyl-CoA</KM>
    </kinetics>
    <phDependence>
        <text evidence="5">Optimum pH is 7.1.</text>
    </phDependence>
</comment>
<comment type="pathway">
    <text evidence="3">Lipid metabolism; mitochondrial fatty acid beta-oxidation.</text>
</comment>
<comment type="subunit">
    <text evidence="5">Homotetramer.</text>
</comment>
<comment type="subcellular location">
    <subcellularLocation>
        <location evidence="5">Mitochondrion matrix</location>
    </subcellularLocation>
</comment>
<comment type="similarity">
    <text evidence="6">Belongs to the acyl-CoA dehydrogenase family.</text>
</comment>
<dbReference type="EC" id="1.3.8.1" evidence="5"/>
<dbReference type="EMBL" id="BC103365">
    <property type="protein sequence ID" value="AAI03366.1"/>
    <property type="molecule type" value="mRNA"/>
</dbReference>
<dbReference type="RefSeq" id="NP_001029573.1">
    <property type="nucleotide sequence ID" value="NM_001034401.2"/>
</dbReference>
<dbReference type="SMR" id="Q3ZBF6"/>
<dbReference type="FunCoup" id="Q3ZBF6">
    <property type="interactions" value="1103"/>
</dbReference>
<dbReference type="STRING" id="9913.ENSBTAP00000058080"/>
<dbReference type="PaxDb" id="9913-ENSBTAP00000009844"/>
<dbReference type="PeptideAtlas" id="Q3ZBF6"/>
<dbReference type="GeneID" id="511222"/>
<dbReference type="KEGG" id="bta:511222"/>
<dbReference type="CTD" id="35"/>
<dbReference type="eggNOG" id="KOG0139">
    <property type="taxonomic scope" value="Eukaryota"/>
</dbReference>
<dbReference type="InParanoid" id="Q3ZBF6"/>
<dbReference type="OrthoDB" id="9988775at2759"/>
<dbReference type="SABIO-RK" id="Q3ZBF6"/>
<dbReference type="UniPathway" id="UPA00660"/>
<dbReference type="Proteomes" id="UP000009136">
    <property type="component" value="Unplaced"/>
</dbReference>
<dbReference type="GO" id="GO:0005759">
    <property type="term" value="C:mitochondrial matrix"/>
    <property type="evidence" value="ECO:0000314"/>
    <property type="project" value="UniProtKB"/>
</dbReference>
<dbReference type="GO" id="GO:0005739">
    <property type="term" value="C:mitochondrion"/>
    <property type="evidence" value="ECO:0000318"/>
    <property type="project" value="GO_Central"/>
</dbReference>
<dbReference type="GO" id="GO:0003995">
    <property type="term" value="F:acyl-CoA dehydrogenase activity"/>
    <property type="evidence" value="ECO:0000314"/>
    <property type="project" value="UniProtKB"/>
</dbReference>
<dbReference type="GO" id="GO:0050660">
    <property type="term" value="F:flavin adenine dinucleotide binding"/>
    <property type="evidence" value="ECO:0007669"/>
    <property type="project" value="InterPro"/>
</dbReference>
<dbReference type="GO" id="GO:0016937">
    <property type="term" value="F:short-chain fatty acyl-CoA dehydrogenase activity"/>
    <property type="evidence" value="ECO:0000314"/>
    <property type="project" value="UniProtKB"/>
</dbReference>
<dbReference type="GO" id="GO:0046359">
    <property type="term" value="P:butyrate catabolic process"/>
    <property type="evidence" value="ECO:0000318"/>
    <property type="project" value="GO_Central"/>
</dbReference>
<dbReference type="GO" id="GO:0033539">
    <property type="term" value="P:fatty acid beta-oxidation using acyl-CoA dehydrogenase"/>
    <property type="evidence" value="ECO:0000318"/>
    <property type="project" value="GO_Central"/>
</dbReference>
<dbReference type="CDD" id="cd01158">
    <property type="entry name" value="SCAD_SBCAD"/>
    <property type="match status" value="1"/>
</dbReference>
<dbReference type="FunFam" id="1.10.540.10:FF:000002">
    <property type="entry name" value="Acyl-CoA dehydrogenase FadE19"/>
    <property type="match status" value="1"/>
</dbReference>
<dbReference type="FunFam" id="1.20.140.10:FF:000004">
    <property type="entry name" value="Acyl-CoA dehydrogenase FadE25"/>
    <property type="match status" value="1"/>
</dbReference>
<dbReference type="FunFam" id="2.40.110.10:FF:000001">
    <property type="entry name" value="Acyl-CoA dehydrogenase, mitochondrial"/>
    <property type="match status" value="1"/>
</dbReference>
<dbReference type="Gene3D" id="1.10.540.10">
    <property type="entry name" value="Acyl-CoA dehydrogenase/oxidase, N-terminal domain"/>
    <property type="match status" value="1"/>
</dbReference>
<dbReference type="Gene3D" id="2.40.110.10">
    <property type="entry name" value="Butyryl-CoA Dehydrogenase, subunit A, domain 2"/>
    <property type="match status" value="1"/>
</dbReference>
<dbReference type="Gene3D" id="1.20.140.10">
    <property type="entry name" value="Butyryl-CoA Dehydrogenase, subunit A, domain 3"/>
    <property type="match status" value="1"/>
</dbReference>
<dbReference type="InterPro" id="IPR006089">
    <property type="entry name" value="Acyl-CoA_DH_CS"/>
</dbReference>
<dbReference type="InterPro" id="IPR006091">
    <property type="entry name" value="Acyl-CoA_Oxase/DH_mid-dom"/>
</dbReference>
<dbReference type="InterPro" id="IPR046373">
    <property type="entry name" value="Acyl-CoA_Oxase/DH_mid-dom_sf"/>
</dbReference>
<dbReference type="InterPro" id="IPR036250">
    <property type="entry name" value="AcylCo_DH-like_C"/>
</dbReference>
<dbReference type="InterPro" id="IPR009075">
    <property type="entry name" value="AcylCo_DH/oxidase_C"/>
</dbReference>
<dbReference type="InterPro" id="IPR013786">
    <property type="entry name" value="AcylCoA_DH/ox_N"/>
</dbReference>
<dbReference type="InterPro" id="IPR037069">
    <property type="entry name" value="AcylCoA_DH/ox_N_sf"/>
</dbReference>
<dbReference type="InterPro" id="IPR009100">
    <property type="entry name" value="AcylCoA_DH/oxidase_NM_dom_sf"/>
</dbReference>
<dbReference type="PANTHER" id="PTHR43884">
    <property type="entry name" value="ACYL-COA DEHYDROGENASE"/>
    <property type="match status" value="1"/>
</dbReference>
<dbReference type="PANTHER" id="PTHR43884:SF12">
    <property type="entry name" value="ISOVALERYL-COA DEHYDROGENASE, MITOCHONDRIAL-RELATED"/>
    <property type="match status" value="1"/>
</dbReference>
<dbReference type="Pfam" id="PF00441">
    <property type="entry name" value="Acyl-CoA_dh_1"/>
    <property type="match status" value="1"/>
</dbReference>
<dbReference type="Pfam" id="PF02770">
    <property type="entry name" value="Acyl-CoA_dh_M"/>
    <property type="match status" value="1"/>
</dbReference>
<dbReference type="Pfam" id="PF02771">
    <property type="entry name" value="Acyl-CoA_dh_N"/>
    <property type="match status" value="1"/>
</dbReference>
<dbReference type="PIRSF" id="PIRSF016578">
    <property type="entry name" value="HsaA"/>
    <property type="match status" value="1"/>
</dbReference>
<dbReference type="SUPFAM" id="SSF47203">
    <property type="entry name" value="Acyl-CoA dehydrogenase C-terminal domain-like"/>
    <property type="match status" value="1"/>
</dbReference>
<dbReference type="SUPFAM" id="SSF56645">
    <property type="entry name" value="Acyl-CoA dehydrogenase NM domain-like"/>
    <property type="match status" value="1"/>
</dbReference>
<dbReference type="PROSITE" id="PS00072">
    <property type="entry name" value="ACYL_COA_DH_1"/>
    <property type="match status" value="1"/>
</dbReference>
<dbReference type="PROSITE" id="PS00073">
    <property type="entry name" value="ACYL_COA_DH_2"/>
    <property type="match status" value="1"/>
</dbReference>
<protein>
    <recommendedName>
        <fullName>Short-chain specific acyl-CoA dehydrogenase, mitochondrial</fullName>
        <shortName>SCAD</shortName>
        <ecNumber evidence="5">1.3.8.1</ecNumber>
    </recommendedName>
    <alternativeName>
        <fullName>Butyryl-CoA dehydrogenase</fullName>
    </alternativeName>
</protein>
<feature type="transit peptide" description="Mitochondrion" evidence="2">
    <location>
        <begin position="1"/>
        <end position="24"/>
    </location>
</feature>
<feature type="chain" id="PRO_0000281994" description="Short-chain specific acyl-CoA dehydrogenase, mitochondrial">
    <location>
        <begin position="25"/>
        <end position="412"/>
    </location>
</feature>
<feature type="active site" description="Proton acceptor" evidence="2">
    <location>
        <position position="392"/>
    </location>
</feature>
<feature type="binding site" description="in other chain" evidence="2">
    <location>
        <begin position="152"/>
        <end position="161"/>
    </location>
    <ligand>
        <name>FAD</name>
        <dbReference type="ChEBI" id="CHEBI:57692"/>
        <note>ligand shared between dimeric partners</note>
    </ligand>
</feature>
<feature type="binding site" evidence="2">
    <location>
        <position position="161"/>
    </location>
    <ligand>
        <name>substrate</name>
    </ligand>
</feature>
<feature type="binding site" description="in other chain" evidence="2">
    <location>
        <begin position="185"/>
        <end position="187"/>
    </location>
    <ligand>
        <name>FAD</name>
        <dbReference type="ChEBI" id="CHEBI:57692"/>
        <note>ligand shared between dimeric partners</note>
    </ligand>
</feature>
<feature type="binding site" evidence="2">
    <location>
        <begin position="269"/>
        <end position="272"/>
    </location>
    <ligand>
        <name>substrate</name>
    </ligand>
</feature>
<feature type="binding site" evidence="2">
    <location>
        <position position="297"/>
    </location>
    <ligand>
        <name>FAD</name>
        <dbReference type="ChEBI" id="CHEBI:57692"/>
        <note>ligand shared between dimeric partners</note>
    </ligand>
</feature>
<feature type="binding site" description="in other chain" evidence="1">
    <location>
        <position position="308"/>
    </location>
    <ligand>
        <name>FAD</name>
        <dbReference type="ChEBI" id="CHEBI:57692"/>
        <note>ligand shared between dimeric partners</note>
    </ligand>
</feature>
<feature type="binding site" description="in other chain" evidence="2">
    <location>
        <begin position="365"/>
        <end position="369"/>
    </location>
    <ligand>
        <name>FAD</name>
        <dbReference type="ChEBI" id="CHEBI:57692"/>
        <note>ligand shared between dimeric partners</note>
    </ligand>
</feature>
<feature type="binding site" evidence="2">
    <location>
        <position position="393"/>
    </location>
    <ligand>
        <name>substrate</name>
    </ligand>
</feature>
<feature type="binding site" description="in other chain" evidence="2">
    <location>
        <begin position="394"/>
        <end position="396"/>
    </location>
    <ligand>
        <name>FAD</name>
        <dbReference type="ChEBI" id="CHEBI:57692"/>
        <note>ligand shared between dimeric partners</note>
    </ligand>
</feature>
<feature type="modified residue" description="Phosphothreonine" evidence="4">
    <location>
        <position position="27"/>
    </location>
</feature>
<feature type="modified residue" description="N6-acetyllysine; alternate" evidence="4">
    <location>
        <position position="51"/>
    </location>
</feature>
<feature type="modified residue" description="N6-succinyllysine; alternate" evidence="4">
    <location>
        <position position="51"/>
    </location>
</feature>
<feature type="modified residue" description="N6-acetyllysine" evidence="4">
    <location>
        <position position="72"/>
    </location>
</feature>
<feature type="modified residue" description="N6-acetyllysine; alternate" evidence="4">
    <location>
        <position position="129"/>
    </location>
</feature>
<feature type="modified residue" description="N6-succinyllysine; alternate" evidence="4">
    <location>
        <position position="129"/>
    </location>
</feature>
<feature type="modified residue" description="N6-acetyllysine" evidence="4">
    <location>
        <position position="208"/>
    </location>
</feature>
<feature type="modified residue" description="N6-acetyllysine; alternate" evidence="4">
    <location>
        <position position="262"/>
    </location>
</feature>
<feature type="modified residue" description="N6-succinyllysine; alternate" evidence="4">
    <location>
        <position position="262"/>
    </location>
</feature>
<feature type="modified residue" description="N6-acetyllysine; alternate" evidence="4">
    <location>
        <position position="306"/>
    </location>
</feature>
<feature type="modified residue" description="N6-succinyllysine; alternate" evidence="4">
    <location>
        <position position="306"/>
    </location>
</feature>
<evidence type="ECO:0000250" key="1"/>
<evidence type="ECO:0000250" key="2">
    <source>
        <dbReference type="UniProtKB" id="P15651"/>
    </source>
</evidence>
<evidence type="ECO:0000250" key="3">
    <source>
        <dbReference type="UniProtKB" id="P16219"/>
    </source>
</evidence>
<evidence type="ECO:0000250" key="4">
    <source>
        <dbReference type="UniProtKB" id="Q07417"/>
    </source>
</evidence>
<evidence type="ECO:0000269" key="5">
    <source>
    </source>
</evidence>
<evidence type="ECO:0000305" key="6"/>
<evidence type="ECO:0000305" key="7">
    <source>
    </source>
</evidence>
<keyword id="KW-0007">Acetylation</keyword>
<keyword id="KW-0274">FAD</keyword>
<keyword id="KW-0276">Fatty acid metabolism</keyword>
<keyword id="KW-0285">Flavoprotein</keyword>
<keyword id="KW-0443">Lipid metabolism</keyword>
<keyword id="KW-0496">Mitochondrion</keyword>
<keyword id="KW-0560">Oxidoreductase</keyword>
<keyword id="KW-0597">Phosphoprotein</keyword>
<keyword id="KW-1185">Reference proteome</keyword>
<keyword id="KW-0809">Transit peptide</keyword>
<accession>Q3ZBF6</accession>
<organism>
    <name type="scientific">Bos taurus</name>
    <name type="common">Bovine</name>
    <dbReference type="NCBI Taxonomy" id="9913"/>
    <lineage>
        <taxon>Eukaryota</taxon>
        <taxon>Metazoa</taxon>
        <taxon>Chordata</taxon>
        <taxon>Craniata</taxon>
        <taxon>Vertebrata</taxon>
        <taxon>Euteleostomi</taxon>
        <taxon>Mammalia</taxon>
        <taxon>Eutheria</taxon>
        <taxon>Laurasiatheria</taxon>
        <taxon>Artiodactyla</taxon>
        <taxon>Ruminantia</taxon>
        <taxon>Pecora</taxon>
        <taxon>Bovidae</taxon>
        <taxon>Bovinae</taxon>
        <taxon>Bos</taxon>
    </lineage>
</organism>
<sequence>MAATLLARACGLVRGAPWPWGWRRLHTVYQSVELPETHQMLRQTCRDFAEKELFPIAAQVDKEHRFPAAQVKKMGELGLMAMNVPEELSGAGLDYLAYSIAMEEISRGCASTGVIMSVNNSLYLGPILKFGTKEQKQQWVAPFTSGDKIGCFALSEPGNGSDAGAAATTARADGDSWVLSGTKAWITNAWEASAVVVFASTDRSLHNKGISAFLVPMPTPGLTLGKKEDKLGIRASSTANLIFEDRRIPKDSLLGEPGLGFKIAMQTLDTGRIGIASQALGIAQAALDCAVTYAENRSAFGAPLTKLQAIQFKLADMALALESARLLTWRAAMLKDNKKPFTKEAAMAKLAASEAATAITHQAMQILGGMGYVKEMPAERHYRDARITEIYEGTSEIQRLVVAGHLLKSYRS</sequence>